<name>CLPP_NITEC</name>
<proteinExistence type="inferred from homology"/>
<gene>
    <name evidence="1" type="primary">clpP</name>
    <name type="ordered locus">Neut_0203</name>
</gene>
<evidence type="ECO:0000255" key="1">
    <source>
        <dbReference type="HAMAP-Rule" id="MF_00444"/>
    </source>
</evidence>
<protein>
    <recommendedName>
        <fullName evidence="1">ATP-dependent Clp protease proteolytic subunit</fullName>
        <ecNumber evidence="1">3.4.21.92</ecNumber>
    </recommendedName>
    <alternativeName>
        <fullName evidence="1">Endopeptidase Clp</fullName>
    </alternativeName>
</protein>
<sequence length="214" mass="23443">MQPILDWEKNELNTTGLGLIPMVIESSGRGERAYDIYSRLLRERIIFLVGPVTETSANLVIAQLLFLESENSEKDISLYINSPGGLVTAGLAVYDTMQFIKPDVSTLCIGQAASMGALLLTAGAKGKRYCLPNSRVMIHQPLGGFQGQASDIEIHAKEILALKGRLNEILAKHTSQTIRTIEKDTDRDNFLGAEAAVKYSLVDAVLTSRKVKHE</sequence>
<organism>
    <name type="scientific">Nitrosomonas eutropha (strain DSM 101675 / C91 / Nm57)</name>
    <dbReference type="NCBI Taxonomy" id="335283"/>
    <lineage>
        <taxon>Bacteria</taxon>
        <taxon>Pseudomonadati</taxon>
        <taxon>Pseudomonadota</taxon>
        <taxon>Betaproteobacteria</taxon>
        <taxon>Nitrosomonadales</taxon>
        <taxon>Nitrosomonadaceae</taxon>
        <taxon>Nitrosomonas</taxon>
    </lineage>
</organism>
<keyword id="KW-0963">Cytoplasm</keyword>
<keyword id="KW-0378">Hydrolase</keyword>
<keyword id="KW-0645">Protease</keyword>
<keyword id="KW-0720">Serine protease</keyword>
<feature type="chain" id="PRO_1000026108" description="ATP-dependent Clp protease proteolytic subunit">
    <location>
        <begin position="1"/>
        <end position="214"/>
    </location>
</feature>
<feature type="active site" description="Nucleophile" evidence="1">
    <location>
        <position position="114"/>
    </location>
</feature>
<feature type="active site" evidence="1">
    <location>
        <position position="139"/>
    </location>
</feature>
<comment type="function">
    <text evidence="1">Cleaves peptides in various proteins in a process that requires ATP hydrolysis. Has a chymotrypsin-like activity. Plays a major role in the degradation of misfolded proteins.</text>
</comment>
<comment type="catalytic activity">
    <reaction evidence="1">
        <text>Hydrolysis of proteins to small peptides in the presence of ATP and magnesium. alpha-casein is the usual test substrate. In the absence of ATP, only oligopeptides shorter than five residues are hydrolyzed (such as succinyl-Leu-Tyr-|-NHMec, and Leu-Tyr-Leu-|-Tyr-Trp, in which cleavage of the -Tyr-|-Leu- and -Tyr-|-Trp bonds also occurs).</text>
        <dbReference type="EC" id="3.4.21.92"/>
    </reaction>
</comment>
<comment type="subunit">
    <text evidence="1">Fourteen ClpP subunits assemble into 2 heptameric rings which stack back to back to give a disk-like structure with a central cavity, resembling the structure of eukaryotic proteasomes.</text>
</comment>
<comment type="subcellular location">
    <subcellularLocation>
        <location evidence="1">Cytoplasm</location>
    </subcellularLocation>
</comment>
<comment type="similarity">
    <text evidence="1">Belongs to the peptidase S14 family.</text>
</comment>
<dbReference type="EC" id="3.4.21.92" evidence="1"/>
<dbReference type="EMBL" id="CP000450">
    <property type="protein sequence ID" value="ABI58489.1"/>
    <property type="molecule type" value="Genomic_DNA"/>
</dbReference>
<dbReference type="RefSeq" id="WP_011633334.1">
    <property type="nucleotide sequence ID" value="NC_008344.1"/>
</dbReference>
<dbReference type="SMR" id="Q0AJI2"/>
<dbReference type="STRING" id="335283.Neut_0203"/>
<dbReference type="MEROPS" id="S14.001"/>
<dbReference type="KEGG" id="net:Neut_0203"/>
<dbReference type="eggNOG" id="COG0740">
    <property type="taxonomic scope" value="Bacteria"/>
</dbReference>
<dbReference type="HOGENOM" id="CLU_058707_3_2_4"/>
<dbReference type="OrthoDB" id="9802800at2"/>
<dbReference type="Proteomes" id="UP000001966">
    <property type="component" value="Chromosome"/>
</dbReference>
<dbReference type="GO" id="GO:0005737">
    <property type="term" value="C:cytoplasm"/>
    <property type="evidence" value="ECO:0007669"/>
    <property type="project" value="UniProtKB-SubCell"/>
</dbReference>
<dbReference type="GO" id="GO:0009368">
    <property type="term" value="C:endopeptidase Clp complex"/>
    <property type="evidence" value="ECO:0007669"/>
    <property type="project" value="TreeGrafter"/>
</dbReference>
<dbReference type="GO" id="GO:0004176">
    <property type="term" value="F:ATP-dependent peptidase activity"/>
    <property type="evidence" value="ECO:0007669"/>
    <property type="project" value="InterPro"/>
</dbReference>
<dbReference type="GO" id="GO:0051117">
    <property type="term" value="F:ATPase binding"/>
    <property type="evidence" value="ECO:0007669"/>
    <property type="project" value="TreeGrafter"/>
</dbReference>
<dbReference type="GO" id="GO:0004252">
    <property type="term" value="F:serine-type endopeptidase activity"/>
    <property type="evidence" value="ECO:0007669"/>
    <property type="project" value="UniProtKB-UniRule"/>
</dbReference>
<dbReference type="GO" id="GO:0006515">
    <property type="term" value="P:protein quality control for misfolded or incompletely synthesized proteins"/>
    <property type="evidence" value="ECO:0007669"/>
    <property type="project" value="TreeGrafter"/>
</dbReference>
<dbReference type="CDD" id="cd07017">
    <property type="entry name" value="S14_ClpP_2"/>
    <property type="match status" value="1"/>
</dbReference>
<dbReference type="FunFam" id="3.90.226.10:FF:000001">
    <property type="entry name" value="ATP-dependent Clp protease proteolytic subunit"/>
    <property type="match status" value="1"/>
</dbReference>
<dbReference type="Gene3D" id="3.90.226.10">
    <property type="entry name" value="2-enoyl-CoA Hydratase, Chain A, domain 1"/>
    <property type="match status" value="1"/>
</dbReference>
<dbReference type="HAMAP" id="MF_00444">
    <property type="entry name" value="ClpP"/>
    <property type="match status" value="1"/>
</dbReference>
<dbReference type="InterPro" id="IPR001907">
    <property type="entry name" value="ClpP"/>
</dbReference>
<dbReference type="InterPro" id="IPR029045">
    <property type="entry name" value="ClpP/crotonase-like_dom_sf"/>
</dbReference>
<dbReference type="InterPro" id="IPR023562">
    <property type="entry name" value="ClpP/TepA"/>
</dbReference>
<dbReference type="InterPro" id="IPR033135">
    <property type="entry name" value="ClpP_His_AS"/>
</dbReference>
<dbReference type="InterPro" id="IPR018215">
    <property type="entry name" value="ClpP_Ser_AS"/>
</dbReference>
<dbReference type="NCBIfam" id="TIGR00493">
    <property type="entry name" value="clpP"/>
    <property type="match status" value="1"/>
</dbReference>
<dbReference type="NCBIfam" id="NF001368">
    <property type="entry name" value="PRK00277.1"/>
    <property type="match status" value="1"/>
</dbReference>
<dbReference type="NCBIfam" id="NF009205">
    <property type="entry name" value="PRK12553.1"/>
    <property type="match status" value="1"/>
</dbReference>
<dbReference type="PANTHER" id="PTHR10381">
    <property type="entry name" value="ATP-DEPENDENT CLP PROTEASE PROTEOLYTIC SUBUNIT"/>
    <property type="match status" value="1"/>
</dbReference>
<dbReference type="PANTHER" id="PTHR10381:SF70">
    <property type="entry name" value="ATP-DEPENDENT CLP PROTEASE PROTEOLYTIC SUBUNIT"/>
    <property type="match status" value="1"/>
</dbReference>
<dbReference type="Pfam" id="PF00574">
    <property type="entry name" value="CLP_protease"/>
    <property type="match status" value="1"/>
</dbReference>
<dbReference type="PRINTS" id="PR00127">
    <property type="entry name" value="CLPPROTEASEP"/>
</dbReference>
<dbReference type="SUPFAM" id="SSF52096">
    <property type="entry name" value="ClpP/crotonase"/>
    <property type="match status" value="1"/>
</dbReference>
<dbReference type="PROSITE" id="PS00382">
    <property type="entry name" value="CLP_PROTEASE_HIS"/>
    <property type="match status" value="1"/>
</dbReference>
<dbReference type="PROSITE" id="PS00381">
    <property type="entry name" value="CLP_PROTEASE_SER"/>
    <property type="match status" value="1"/>
</dbReference>
<reference key="1">
    <citation type="journal article" date="2007" name="Environ. Microbiol.">
        <title>Whole-genome analysis of the ammonia-oxidizing bacterium, Nitrosomonas eutropha C91: implications for niche adaptation.</title>
        <authorList>
            <person name="Stein L.Y."/>
            <person name="Arp D.J."/>
            <person name="Berube P.M."/>
            <person name="Chain P.S."/>
            <person name="Hauser L."/>
            <person name="Jetten M.S."/>
            <person name="Klotz M.G."/>
            <person name="Larimer F.W."/>
            <person name="Norton J.M."/>
            <person name="Op den Camp H.J.M."/>
            <person name="Shin M."/>
            <person name="Wei X."/>
        </authorList>
    </citation>
    <scope>NUCLEOTIDE SEQUENCE [LARGE SCALE GENOMIC DNA]</scope>
    <source>
        <strain>DSM 101675 / C91 / Nm57</strain>
    </source>
</reference>
<accession>Q0AJI2</accession>